<name>COAX_DESAL</name>
<accession>B8FMB1</accession>
<comment type="function">
    <text evidence="1">Catalyzes the phosphorylation of pantothenate (Pan), the first step in CoA biosynthesis.</text>
</comment>
<comment type="catalytic activity">
    <reaction evidence="1">
        <text>(R)-pantothenate + ATP = (R)-4'-phosphopantothenate + ADP + H(+)</text>
        <dbReference type="Rhea" id="RHEA:16373"/>
        <dbReference type="ChEBI" id="CHEBI:10986"/>
        <dbReference type="ChEBI" id="CHEBI:15378"/>
        <dbReference type="ChEBI" id="CHEBI:29032"/>
        <dbReference type="ChEBI" id="CHEBI:30616"/>
        <dbReference type="ChEBI" id="CHEBI:456216"/>
        <dbReference type="EC" id="2.7.1.33"/>
    </reaction>
</comment>
<comment type="cofactor">
    <cofactor evidence="1">
        <name>NH4(+)</name>
        <dbReference type="ChEBI" id="CHEBI:28938"/>
    </cofactor>
    <cofactor evidence="1">
        <name>K(+)</name>
        <dbReference type="ChEBI" id="CHEBI:29103"/>
    </cofactor>
    <text evidence="1">A monovalent cation. Ammonium or potassium.</text>
</comment>
<comment type="pathway">
    <text evidence="1">Cofactor biosynthesis; coenzyme A biosynthesis; CoA from (R)-pantothenate: step 1/5.</text>
</comment>
<comment type="subunit">
    <text evidence="1">Homodimer.</text>
</comment>
<comment type="subcellular location">
    <subcellularLocation>
        <location evidence="1">Cytoplasm</location>
    </subcellularLocation>
</comment>
<comment type="similarity">
    <text evidence="1">Belongs to the type III pantothenate kinase family.</text>
</comment>
<dbReference type="EC" id="2.7.1.33" evidence="1"/>
<dbReference type="EMBL" id="CP001322">
    <property type="protein sequence ID" value="ACL05949.1"/>
    <property type="molecule type" value="Genomic_DNA"/>
</dbReference>
<dbReference type="RefSeq" id="WP_015948996.1">
    <property type="nucleotide sequence ID" value="NC_011768.1"/>
</dbReference>
<dbReference type="SMR" id="B8FMB1"/>
<dbReference type="KEGG" id="dal:Dalk_4269"/>
<dbReference type="eggNOG" id="COG1521">
    <property type="taxonomic scope" value="Bacteria"/>
</dbReference>
<dbReference type="HOGENOM" id="CLU_066627_1_0_7"/>
<dbReference type="UniPathway" id="UPA00241">
    <property type="reaction ID" value="UER00352"/>
</dbReference>
<dbReference type="Proteomes" id="UP000000739">
    <property type="component" value="Chromosome"/>
</dbReference>
<dbReference type="GO" id="GO:0005737">
    <property type="term" value="C:cytoplasm"/>
    <property type="evidence" value="ECO:0007669"/>
    <property type="project" value="UniProtKB-SubCell"/>
</dbReference>
<dbReference type="GO" id="GO:0005524">
    <property type="term" value="F:ATP binding"/>
    <property type="evidence" value="ECO:0007669"/>
    <property type="project" value="UniProtKB-UniRule"/>
</dbReference>
<dbReference type="GO" id="GO:0046872">
    <property type="term" value="F:metal ion binding"/>
    <property type="evidence" value="ECO:0007669"/>
    <property type="project" value="UniProtKB-KW"/>
</dbReference>
<dbReference type="GO" id="GO:0004594">
    <property type="term" value="F:pantothenate kinase activity"/>
    <property type="evidence" value="ECO:0007669"/>
    <property type="project" value="UniProtKB-UniRule"/>
</dbReference>
<dbReference type="GO" id="GO:0015937">
    <property type="term" value="P:coenzyme A biosynthetic process"/>
    <property type="evidence" value="ECO:0007669"/>
    <property type="project" value="UniProtKB-UniRule"/>
</dbReference>
<dbReference type="CDD" id="cd24015">
    <property type="entry name" value="ASKHA_NBD_PanK-III"/>
    <property type="match status" value="1"/>
</dbReference>
<dbReference type="Gene3D" id="3.30.420.40">
    <property type="match status" value="2"/>
</dbReference>
<dbReference type="HAMAP" id="MF_01274">
    <property type="entry name" value="Pantothen_kinase_3"/>
    <property type="match status" value="1"/>
</dbReference>
<dbReference type="InterPro" id="IPR043129">
    <property type="entry name" value="ATPase_NBD"/>
</dbReference>
<dbReference type="InterPro" id="IPR004619">
    <property type="entry name" value="Type_III_PanK"/>
</dbReference>
<dbReference type="NCBIfam" id="TIGR00671">
    <property type="entry name" value="baf"/>
    <property type="match status" value="1"/>
</dbReference>
<dbReference type="NCBIfam" id="NF009848">
    <property type="entry name" value="PRK13318.1-6"/>
    <property type="match status" value="1"/>
</dbReference>
<dbReference type="NCBIfam" id="NF009855">
    <property type="entry name" value="PRK13321.1"/>
    <property type="match status" value="1"/>
</dbReference>
<dbReference type="PANTHER" id="PTHR34265">
    <property type="entry name" value="TYPE III PANTOTHENATE KINASE"/>
    <property type="match status" value="1"/>
</dbReference>
<dbReference type="PANTHER" id="PTHR34265:SF1">
    <property type="entry name" value="TYPE III PANTOTHENATE KINASE"/>
    <property type="match status" value="1"/>
</dbReference>
<dbReference type="Pfam" id="PF03309">
    <property type="entry name" value="Pan_kinase"/>
    <property type="match status" value="1"/>
</dbReference>
<dbReference type="SUPFAM" id="SSF53067">
    <property type="entry name" value="Actin-like ATPase domain"/>
    <property type="match status" value="2"/>
</dbReference>
<sequence length="257" mass="28008">MLLVIDVGNTNTVMGVFDDQRVVCDWRIRTERETTEDEFFVLASQLFAGKDIKPEIITATIVSCVVPPMRKILHAFCKKYLGHEPIWVSAEMDMGMPILYDNPAEVGADRIVNAVAAYERYHDALIVIDFGTATTFDCISKDGEYLGGAISPGVGIASEALFARASKLPRVEIFNPPAQAIGKDTAKSMQSGIILGYAGLVDGLVRRIVKEMENKPRVIATGGLAPLMANVAETIEEVESGLTLEGLRIIFDRVSNS</sequence>
<organism>
    <name type="scientific">Desulfatibacillum aliphaticivorans</name>
    <dbReference type="NCBI Taxonomy" id="218208"/>
    <lineage>
        <taxon>Bacteria</taxon>
        <taxon>Pseudomonadati</taxon>
        <taxon>Thermodesulfobacteriota</taxon>
        <taxon>Desulfobacteria</taxon>
        <taxon>Desulfobacterales</taxon>
        <taxon>Desulfatibacillaceae</taxon>
        <taxon>Desulfatibacillum</taxon>
    </lineage>
</organism>
<keyword id="KW-0067">ATP-binding</keyword>
<keyword id="KW-0173">Coenzyme A biosynthesis</keyword>
<keyword id="KW-0963">Cytoplasm</keyword>
<keyword id="KW-0418">Kinase</keyword>
<keyword id="KW-0479">Metal-binding</keyword>
<keyword id="KW-0547">Nucleotide-binding</keyword>
<keyword id="KW-0630">Potassium</keyword>
<keyword id="KW-1185">Reference proteome</keyword>
<keyword id="KW-0808">Transferase</keyword>
<reference key="1">
    <citation type="journal article" date="2012" name="Environ. Microbiol.">
        <title>The genome sequence of Desulfatibacillum alkenivorans AK-01: a blueprint for anaerobic alkane oxidation.</title>
        <authorList>
            <person name="Callaghan A.V."/>
            <person name="Morris B.E."/>
            <person name="Pereira I.A."/>
            <person name="McInerney M.J."/>
            <person name="Austin R.N."/>
            <person name="Groves J.T."/>
            <person name="Kukor J.J."/>
            <person name="Suflita J.M."/>
            <person name="Young L.Y."/>
            <person name="Zylstra G.J."/>
            <person name="Wawrik B."/>
        </authorList>
    </citation>
    <scope>NUCLEOTIDE SEQUENCE [LARGE SCALE GENOMIC DNA]</scope>
    <source>
        <strain>AK-01</strain>
    </source>
</reference>
<feature type="chain" id="PRO_1000140238" description="Type III pantothenate kinase">
    <location>
        <begin position="1"/>
        <end position="257"/>
    </location>
</feature>
<feature type="active site" description="Proton acceptor" evidence="1">
    <location>
        <position position="109"/>
    </location>
</feature>
<feature type="binding site" evidence="1">
    <location>
        <begin position="6"/>
        <end position="13"/>
    </location>
    <ligand>
        <name>ATP</name>
        <dbReference type="ChEBI" id="CHEBI:30616"/>
    </ligand>
</feature>
<feature type="binding site" evidence="1">
    <location>
        <position position="100"/>
    </location>
    <ligand>
        <name>substrate</name>
    </ligand>
</feature>
<feature type="binding site" evidence="1">
    <location>
        <begin position="107"/>
        <end position="110"/>
    </location>
    <ligand>
        <name>substrate</name>
    </ligand>
</feature>
<feature type="binding site" evidence="1">
    <location>
        <position position="129"/>
    </location>
    <ligand>
        <name>K(+)</name>
        <dbReference type="ChEBI" id="CHEBI:29103"/>
    </ligand>
</feature>
<feature type="binding site" evidence="1">
    <location>
        <position position="132"/>
    </location>
    <ligand>
        <name>ATP</name>
        <dbReference type="ChEBI" id="CHEBI:30616"/>
    </ligand>
</feature>
<feature type="binding site" evidence="1">
    <location>
        <position position="185"/>
    </location>
    <ligand>
        <name>substrate</name>
    </ligand>
</feature>
<protein>
    <recommendedName>
        <fullName evidence="1">Type III pantothenate kinase</fullName>
        <ecNumber evidence="1">2.7.1.33</ecNumber>
    </recommendedName>
    <alternativeName>
        <fullName evidence="1">PanK-III</fullName>
    </alternativeName>
    <alternativeName>
        <fullName evidence="1">Pantothenic acid kinase</fullName>
    </alternativeName>
</protein>
<evidence type="ECO:0000255" key="1">
    <source>
        <dbReference type="HAMAP-Rule" id="MF_01274"/>
    </source>
</evidence>
<gene>
    <name evidence="1" type="primary">coaX</name>
    <name type="ordered locus">Dalk_4269</name>
</gene>
<proteinExistence type="inferred from homology"/>